<comment type="function">
    <text evidence="5">Involved in innate immune response of plants.</text>
</comment>
<comment type="interaction">
    <interactant intactId="EBI-16905038">
        <id>O64483</id>
    </interactant>
    <interactant intactId="EBI-17126713">
        <id>C0LGE4</id>
        <label>At1g12460</label>
    </interactant>
    <organismsDiffer>false</organismsDiffer>
    <experiments>2</experiments>
</comment>
<comment type="interaction">
    <interactant intactId="EBI-16905038">
        <id>O64483</id>
    </interactant>
    <interactant intactId="EBI-16956175">
        <id>Q9LRT1</id>
        <label>At3g28040</label>
    </interactant>
    <organismsDiffer>false</organismsDiffer>
    <experiments>2</experiments>
</comment>
<comment type="interaction">
    <interactant intactId="EBI-16905038">
        <id>O64483</id>
    </interactant>
    <interactant intactId="EBI-17071528">
        <id>Q9FRI1</id>
        <label>LRR-RLK</label>
    </interactant>
    <organismsDiffer>false</organismsDiffer>
    <experiments>2</experiments>
</comment>
<comment type="interaction">
    <interactant intactId="EBI-16905038">
        <id>O64483</id>
    </interactant>
    <interactant intactId="EBI-1238200">
        <id>Q9LZV7</id>
        <label>PXC2</label>
    </interactant>
    <organismsDiffer>false</organismsDiffer>
    <experiments>2</experiments>
</comment>
<comment type="subcellular location">
    <subcellularLocation>
        <location>Membrane</location>
        <topology>Single-pass type I membrane protein</topology>
    </subcellularLocation>
</comment>
<comment type="induction">
    <text evidence="5">Highly induced by WRKY22 or WRKY29 and by WRKY6 in senescent leaves. Also induced 30 minutes after flagellin treatment.</text>
</comment>
<comment type="similarity">
    <text evidence="3">Belongs to the protein kinase superfamily. Ser/Thr protein kinase family.</text>
</comment>
<accession>O64483</accession>
<dbReference type="EMBL" id="AF486619">
    <property type="protein sequence ID" value="AAL92103.1"/>
    <property type="molecule type" value="mRNA"/>
</dbReference>
<dbReference type="EMBL" id="AC002392">
    <property type="protein sequence ID" value="AAD12037.1"/>
    <property type="molecule type" value="Genomic_DNA"/>
</dbReference>
<dbReference type="EMBL" id="CP002685">
    <property type="protein sequence ID" value="AEC06856.1"/>
    <property type="molecule type" value="Genomic_DNA"/>
</dbReference>
<dbReference type="PIR" id="T00540">
    <property type="entry name" value="T00540"/>
</dbReference>
<dbReference type="RefSeq" id="NP_179509.1">
    <property type="nucleotide sequence ID" value="NM_127476.2"/>
</dbReference>
<dbReference type="SMR" id="O64483"/>
<dbReference type="BioGRID" id="1793">
    <property type="interactions" value="43"/>
</dbReference>
<dbReference type="FunCoup" id="O64483">
    <property type="interactions" value="303"/>
</dbReference>
<dbReference type="IntAct" id="O64483">
    <property type="interactions" value="42"/>
</dbReference>
<dbReference type="STRING" id="3702.O64483"/>
<dbReference type="iPTMnet" id="O64483"/>
<dbReference type="PaxDb" id="3702-AT2G19190.1"/>
<dbReference type="ProteomicsDB" id="232537"/>
<dbReference type="EnsemblPlants" id="AT2G19190.1">
    <property type="protein sequence ID" value="AT2G19190.1"/>
    <property type="gene ID" value="AT2G19190"/>
</dbReference>
<dbReference type="GeneID" id="816436"/>
<dbReference type="Gramene" id="AT2G19190.1">
    <property type="protein sequence ID" value="AT2G19190.1"/>
    <property type="gene ID" value="AT2G19190"/>
</dbReference>
<dbReference type="KEGG" id="ath:AT2G19190"/>
<dbReference type="Araport" id="AT2G19190"/>
<dbReference type="TAIR" id="AT2G19190">
    <property type="gene designation" value="FRK1"/>
</dbReference>
<dbReference type="eggNOG" id="ENOG502QQCZ">
    <property type="taxonomic scope" value="Eukaryota"/>
</dbReference>
<dbReference type="HOGENOM" id="CLU_000288_41_1_1"/>
<dbReference type="InParanoid" id="O64483"/>
<dbReference type="OMA" id="CANDNSC"/>
<dbReference type="PhylomeDB" id="O64483"/>
<dbReference type="PRO" id="PR:O64483"/>
<dbReference type="Proteomes" id="UP000006548">
    <property type="component" value="Chromosome 2"/>
</dbReference>
<dbReference type="ExpressionAtlas" id="O64483">
    <property type="expression patterns" value="baseline and differential"/>
</dbReference>
<dbReference type="GO" id="GO:0016020">
    <property type="term" value="C:membrane"/>
    <property type="evidence" value="ECO:0007669"/>
    <property type="project" value="UniProtKB-SubCell"/>
</dbReference>
<dbReference type="GO" id="GO:0005524">
    <property type="term" value="F:ATP binding"/>
    <property type="evidence" value="ECO:0007669"/>
    <property type="project" value="UniProtKB-KW"/>
</dbReference>
<dbReference type="GO" id="GO:0004674">
    <property type="term" value="F:protein serine/threonine kinase activity"/>
    <property type="evidence" value="ECO:0007669"/>
    <property type="project" value="UniProtKB-KW"/>
</dbReference>
<dbReference type="GO" id="GO:0042742">
    <property type="term" value="P:defense response to bacterium"/>
    <property type="evidence" value="ECO:0000314"/>
    <property type="project" value="TAIR"/>
</dbReference>
<dbReference type="CDD" id="cd14066">
    <property type="entry name" value="STKc_IRAK"/>
    <property type="match status" value="1"/>
</dbReference>
<dbReference type="FunFam" id="3.80.10.10:FF:000129">
    <property type="entry name" value="Leucine-rich repeat receptor-like kinase"/>
    <property type="match status" value="1"/>
</dbReference>
<dbReference type="FunFam" id="3.30.200.20:FF:000394">
    <property type="entry name" value="Leucine-rich repeat receptor-like protein kinase"/>
    <property type="match status" value="1"/>
</dbReference>
<dbReference type="FunFam" id="1.10.510.10:FF:000146">
    <property type="entry name" value="LRR receptor-like serine/threonine-protein kinase IOS1"/>
    <property type="match status" value="1"/>
</dbReference>
<dbReference type="Gene3D" id="3.30.200.20">
    <property type="entry name" value="Phosphorylase Kinase, domain 1"/>
    <property type="match status" value="1"/>
</dbReference>
<dbReference type="Gene3D" id="3.80.10.10">
    <property type="entry name" value="Ribonuclease Inhibitor"/>
    <property type="match status" value="1"/>
</dbReference>
<dbReference type="Gene3D" id="1.10.510.10">
    <property type="entry name" value="Transferase(Phosphotransferase) domain 1"/>
    <property type="match status" value="1"/>
</dbReference>
<dbReference type="InterPro" id="IPR011009">
    <property type="entry name" value="Kinase-like_dom_sf"/>
</dbReference>
<dbReference type="InterPro" id="IPR001611">
    <property type="entry name" value="Leu-rich_rpt"/>
</dbReference>
<dbReference type="InterPro" id="IPR032675">
    <property type="entry name" value="LRR_dom_sf"/>
</dbReference>
<dbReference type="InterPro" id="IPR024788">
    <property type="entry name" value="Malectin-like_Carb-bd_dom"/>
</dbReference>
<dbReference type="InterPro" id="IPR000719">
    <property type="entry name" value="Prot_kinase_dom"/>
</dbReference>
<dbReference type="InterPro" id="IPR017441">
    <property type="entry name" value="Protein_kinase_ATP_BS"/>
</dbReference>
<dbReference type="InterPro" id="IPR008271">
    <property type="entry name" value="Ser/Thr_kinase_AS"/>
</dbReference>
<dbReference type="PANTHER" id="PTHR45631">
    <property type="entry name" value="OS07G0107800 PROTEIN-RELATED"/>
    <property type="match status" value="1"/>
</dbReference>
<dbReference type="PANTHER" id="PTHR45631:SF202">
    <property type="entry name" value="SENESCENCE-INDUCED RECEPTOR-LIKE SERINE_THREONINE-PROTEIN KINASE"/>
    <property type="match status" value="1"/>
</dbReference>
<dbReference type="Pfam" id="PF13855">
    <property type="entry name" value="LRR_8"/>
    <property type="match status" value="1"/>
</dbReference>
<dbReference type="Pfam" id="PF12819">
    <property type="entry name" value="Malectin_like"/>
    <property type="match status" value="1"/>
</dbReference>
<dbReference type="Pfam" id="PF00069">
    <property type="entry name" value="Pkinase"/>
    <property type="match status" value="1"/>
</dbReference>
<dbReference type="SMART" id="SM00220">
    <property type="entry name" value="S_TKc"/>
    <property type="match status" value="1"/>
</dbReference>
<dbReference type="SUPFAM" id="SSF52058">
    <property type="entry name" value="L domain-like"/>
    <property type="match status" value="1"/>
</dbReference>
<dbReference type="SUPFAM" id="SSF56112">
    <property type="entry name" value="Protein kinase-like (PK-like)"/>
    <property type="match status" value="1"/>
</dbReference>
<dbReference type="PROSITE" id="PS00107">
    <property type="entry name" value="PROTEIN_KINASE_ATP"/>
    <property type="match status" value="1"/>
</dbReference>
<dbReference type="PROSITE" id="PS50011">
    <property type="entry name" value="PROTEIN_KINASE_DOM"/>
    <property type="match status" value="1"/>
</dbReference>
<dbReference type="PROSITE" id="PS00108">
    <property type="entry name" value="PROTEIN_KINASE_ST"/>
    <property type="match status" value="1"/>
</dbReference>
<sequence length="876" mass="98712">MAMLKSLSSILFTSFALLFFLVHAQDQSGFISIDCGIPDDSSYNDETTGIKYVSDSAFVDSGTTKRIAAQFQSSGFDRHLLNVRSFPQSKRSCYDVPTPRGKGFKYLIRTRFMYGNYDDLGRVPEFDLYLGVNFWDSVKLDDATTILNKEIITIPLLDNVQVCVVDKNAGTPFLSVLEIRLLLNTTYETPYDALTLLRRLDYSKTGKLPSRYKDDIYDRIWTPRIVSSEYKILNTSLTVDQFLNNGYQPASTVMSTAETARNESLYLTLSFRPPDPNAKFYVYMHFAEIEVLKSNQTREFSIWLNEDVISPSFKLRYLLTDTFVTPDPVSGITINFSLLQPPGEFVLPPIINALEVYQVNEFLQIPTHPQDVDAMRKIKATYRVKKNWQGDPCVPVDYSWEGIDCIQSDNTTNPRVVSLNISFSELRGQIDPAFSNLTSIRKLDLSGNTLTGEIPAFLANLPNLTELNVEGNKLTGIVPQRLHERSKNGSLSLRFGRNPDLCLSDSCSNTKKKNKNGYIIPLVVVGIIVVLLTALALFRRFKKKQQRGTLGERNGPLKTAKRYFKYSEVVNITNNFERVIGKGGFGKVYHGVINGEQVAVKVLSEESAQGYKEFRAEVDLLMRVHHTNLTSLVGYCNEINHMVLIYEYMANENLGDYLAGKRSFILSWEERLKISLDAAQGLEYLHNGCKPPIVHRDVKPTNILLNEKLQAKMADFGLSRSFSVEGSGQISTVVAGSIGYLDPEYYSTRQMNEKSDVYSLGVVLLEVITGQPAIASSKTEKVHISDHVRSILANGDIRGIVDQRLRERYDVGSAWKMSEIALACTEHTSAQRPTMSQVVMELKQIVYGIVTDQENYDDSTKMLTVNLDTEMVPRAR</sequence>
<gene>
    <name type="primary">SIRK</name>
    <name type="synonym">FRK1</name>
    <name type="ordered locus">At2g19190</name>
    <name type="ORF">T20K24.21</name>
</gene>
<keyword id="KW-0067">ATP-binding</keyword>
<keyword id="KW-0418">Kinase</keyword>
<keyword id="KW-0433">Leucine-rich repeat</keyword>
<keyword id="KW-0472">Membrane</keyword>
<keyword id="KW-0547">Nucleotide-binding</keyword>
<keyword id="KW-0597">Phosphoprotein</keyword>
<keyword id="KW-0611">Plant defense</keyword>
<keyword id="KW-0675">Receptor</keyword>
<keyword id="KW-1185">Reference proteome</keyword>
<keyword id="KW-0677">Repeat</keyword>
<keyword id="KW-0723">Serine/threonine-protein kinase</keyword>
<keyword id="KW-0732">Signal</keyword>
<keyword id="KW-0808">Transferase</keyword>
<keyword id="KW-0812">Transmembrane</keyword>
<keyword id="KW-1133">Transmembrane helix</keyword>
<feature type="signal peptide" evidence="2">
    <location>
        <begin position="1"/>
        <end position="24"/>
    </location>
</feature>
<feature type="chain" id="PRO_0000024384" description="Senescence-induced receptor-like serine/threonine-protein kinase">
    <location>
        <begin position="25"/>
        <end position="876"/>
    </location>
</feature>
<feature type="topological domain" description="Extracellular" evidence="2">
    <location>
        <begin position="25"/>
        <end position="517"/>
    </location>
</feature>
<feature type="transmembrane region" description="Helical" evidence="2">
    <location>
        <begin position="518"/>
        <end position="538"/>
    </location>
</feature>
<feature type="topological domain" description="Cytoplasmic" evidence="2">
    <location>
        <begin position="539"/>
        <end position="876"/>
    </location>
</feature>
<feature type="repeat" description="LRR 1">
    <location>
        <begin position="415"/>
        <end position="438"/>
    </location>
</feature>
<feature type="repeat" description="LRR 2">
    <location>
        <begin position="439"/>
        <end position="462"/>
    </location>
</feature>
<feature type="repeat" description="LRR 3">
    <location>
        <begin position="463"/>
        <end position="483"/>
    </location>
</feature>
<feature type="domain" description="Protein kinase" evidence="3">
    <location>
        <begin position="574"/>
        <end position="847"/>
    </location>
</feature>
<feature type="active site" description="Proton acceptor" evidence="3 4">
    <location>
        <position position="697"/>
    </location>
</feature>
<feature type="binding site" evidence="3">
    <location>
        <begin position="580"/>
        <end position="588"/>
    </location>
    <ligand>
        <name>ATP</name>
        <dbReference type="ChEBI" id="CHEBI:30616"/>
    </ligand>
</feature>
<feature type="binding site" evidence="3">
    <location>
        <position position="601"/>
    </location>
    <ligand>
        <name>ATP</name>
        <dbReference type="ChEBI" id="CHEBI:30616"/>
    </ligand>
</feature>
<feature type="modified residue" description="Phosphotyrosine" evidence="1">
    <location>
        <position position="646"/>
    </location>
</feature>
<feature type="modified residue" description="Phosphoserine" evidence="1">
    <location>
        <position position="731"/>
    </location>
</feature>
<feature type="modified residue" description="Phosphothreonine" evidence="1">
    <location>
        <position position="732"/>
    </location>
</feature>
<feature type="modified residue" description="Phosphotyrosine" evidence="1">
    <location>
        <position position="745"/>
    </location>
</feature>
<evidence type="ECO:0000250" key="1">
    <source>
        <dbReference type="UniProtKB" id="O48814"/>
    </source>
</evidence>
<evidence type="ECO:0000255" key="2"/>
<evidence type="ECO:0000255" key="3">
    <source>
        <dbReference type="PROSITE-ProRule" id="PRU00159"/>
    </source>
</evidence>
<evidence type="ECO:0000255" key="4">
    <source>
        <dbReference type="PROSITE-ProRule" id="PRU10027"/>
    </source>
</evidence>
<evidence type="ECO:0000269" key="5">
    <source>
    </source>
</evidence>
<protein>
    <recommendedName>
        <fullName>Senescence-induced receptor-like serine/threonine-protein kinase</fullName>
    </recommendedName>
    <alternativeName>
        <fullName>FLG22-induced receptor-like kinase 1</fullName>
    </alternativeName>
</protein>
<reference key="1">
    <citation type="journal article" date="2002" name="Genes Dev.">
        <title>Targets of AtWRKY6 regulation during plant senescence and pathogen defense.</title>
        <authorList>
            <person name="Robatzek S."/>
            <person name="Somssich I.E."/>
        </authorList>
    </citation>
    <scope>NUCLEOTIDE SEQUENCE</scope>
    <source>
        <strain>cv. Columbia</strain>
    </source>
</reference>
<reference key="2">
    <citation type="journal article" date="1999" name="Nature">
        <title>Sequence and analysis of chromosome 2 of the plant Arabidopsis thaliana.</title>
        <authorList>
            <person name="Lin X."/>
            <person name="Kaul S."/>
            <person name="Rounsley S.D."/>
            <person name="Shea T.P."/>
            <person name="Benito M.-I."/>
            <person name="Town C.D."/>
            <person name="Fujii C.Y."/>
            <person name="Mason T.M."/>
            <person name="Bowman C.L."/>
            <person name="Barnstead M.E."/>
            <person name="Feldblyum T.V."/>
            <person name="Buell C.R."/>
            <person name="Ketchum K.A."/>
            <person name="Lee J.J."/>
            <person name="Ronning C.M."/>
            <person name="Koo H.L."/>
            <person name="Moffat K.S."/>
            <person name="Cronin L.A."/>
            <person name="Shen M."/>
            <person name="Pai G."/>
            <person name="Van Aken S."/>
            <person name="Umayam L."/>
            <person name="Tallon L.J."/>
            <person name="Gill J.E."/>
            <person name="Adams M.D."/>
            <person name="Carrera A.J."/>
            <person name="Creasy T.H."/>
            <person name="Goodman H.M."/>
            <person name="Somerville C.R."/>
            <person name="Copenhaver G.P."/>
            <person name="Preuss D."/>
            <person name="Nierman W.C."/>
            <person name="White O."/>
            <person name="Eisen J.A."/>
            <person name="Salzberg S.L."/>
            <person name="Fraser C.M."/>
            <person name="Venter J.C."/>
        </authorList>
    </citation>
    <scope>NUCLEOTIDE SEQUENCE [LARGE SCALE GENOMIC DNA]</scope>
    <source>
        <strain>cv. Columbia</strain>
    </source>
</reference>
<reference key="3">
    <citation type="journal article" date="2017" name="Plant J.">
        <title>Araport11: a complete reannotation of the Arabidopsis thaliana reference genome.</title>
        <authorList>
            <person name="Cheng C.Y."/>
            <person name="Krishnakumar V."/>
            <person name="Chan A.P."/>
            <person name="Thibaud-Nissen F."/>
            <person name="Schobel S."/>
            <person name="Town C.D."/>
        </authorList>
    </citation>
    <scope>GENOME REANNOTATION</scope>
    <source>
        <strain>cv. Columbia</strain>
    </source>
</reference>
<reference key="4">
    <citation type="journal article" date="2002" name="Nature">
        <title>MAP kinase signalling cascade in Arabidopsis innate immunity.</title>
        <authorList>
            <person name="Asai T."/>
            <person name="Tena G."/>
            <person name="Plotnikova J."/>
            <person name="Willmann M.R."/>
            <person name="Chiu W.-L."/>
            <person name="Gomez-Gomez L."/>
            <person name="Boller T."/>
            <person name="Ausubel F.M."/>
            <person name="Sheen J."/>
        </authorList>
    </citation>
    <scope>FUNCTION</scope>
    <scope>INDUCTION</scope>
</reference>
<organism>
    <name type="scientific">Arabidopsis thaliana</name>
    <name type="common">Mouse-ear cress</name>
    <dbReference type="NCBI Taxonomy" id="3702"/>
    <lineage>
        <taxon>Eukaryota</taxon>
        <taxon>Viridiplantae</taxon>
        <taxon>Streptophyta</taxon>
        <taxon>Embryophyta</taxon>
        <taxon>Tracheophyta</taxon>
        <taxon>Spermatophyta</taxon>
        <taxon>Magnoliopsida</taxon>
        <taxon>eudicotyledons</taxon>
        <taxon>Gunneridae</taxon>
        <taxon>Pentapetalae</taxon>
        <taxon>rosids</taxon>
        <taxon>malvids</taxon>
        <taxon>Brassicales</taxon>
        <taxon>Brassicaceae</taxon>
        <taxon>Camelineae</taxon>
        <taxon>Arabidopsis</taxon>
    </lineage>
</organism>
<proteinExistence type="evidence at protein level"/>
<name>SIRK_ARATH</name>